<organism>
    <name type="scientific">Chlorobaculum parvum (strain DSM 263 / NCIMB 8327)</name>
    <name type="common">Chlorobium vibrioforme subsp. thiosulfatophilum</name>
    <dbReference type="NCBI Taxonomy" id="517417"/>
    <lineage>
        <taxon>Bacteria</taxon>
        <taxon>Pseudomonadati</taxon>
        <taxon>Chlorobiota</taxon>
        <taxon>Chlorobiia</taxon>
        <taxon>Chlorobiales</taxon>
        <taxon>Chlorobiaceae</taxon>
        <taxon>Chlorobaculum</taxon>
    </lineage>
</organism>
<protein>
    <recommendedName>
        <fullName evidence="1">Ribosomal protein L11 methyltransferase</fullName>
        <shortName evidence="1">L11 Mtase</shortName>
        <ecNumber evidence="1">2.1.1.-</ecNumber>
    </recommendedName>
</protein>
<name>PRMA_CHLP8</name>
<feature type="chain" id="PRO_1000192601" description="Ribosomal protein L11 methyltransferase">
    <location>
        <begin position="1"/>
        <end position="289"/>
    </location>
</feature>
<feature type="binding site" evidence="1">
    <location>
        <position position="135"/>
    </location>
    <ligand>
        <name>S-adenosyl-L-methionine</name>
        <dbReference type="ChEBI" id="CHEBI:59789"/>
    </ligand>
</feature>
<feature type="binding site" evidence="1">
    <location>
        <position position="156"/>
    </location>
    <ligand>
        <name>S-adenosyl-L-methionine</name>
        <dbReference type="ChEBI" id="CHEBI:59789"/>
    </ligand>
</feature>
<feature type="binding site" evidence="1">
    <location>
        <position position="179"/>
    </location>
    <ligand>
        <name>S-adenosyl-L-methionine</name>
        <dbReference type="ChEBI" id="CHEBI:59789"/>
    </ligand>
</feature>
<feature type="binding site" evidence="1">
    <location>
        <position position="225"/>
    </location>
    <ligand>
        <name>S-adenosyl-L-methionine</name>
        <dbReference type="ChEBI" id="CHEBI:59789"/>
    </ligand>
</feature>
<proteinExistence type="inferred from homology"/>
<gene>
    <name evidence="1" type="primary">prmA</name>
    <name type="ordered locus">Cpar_2005</name>
</gene>
<accession>B3QLQ8</accession>
<dbReference type="EC" id="2.1.1.-" evidence="1"/>
<dbReference type="EMBL" id="CP001099">
    <property type="protein sequence ID" value="ACF12394.1"/>
    <property type="molecule type" value="Genomic_DNA"/>
</dbReference>
<dbReference type="RefSeq" id="WP_012503227.1">
    <property type="nucleotide sequence ID" value="NC_011027.1"/>
</dbReference>
<dbReference type="SMR" id="B3QLQ8"/>
<dbReference type="STRING" id="517417.Cpar_2005"/>
<dbReference type="KEGG" id="cpc:Cpar_2005"/>
<dbReference type="eggNOG" id="COG2264">
    <property type="taxonomic scope" value="Bacteria"/>
</dbReference>
<dbReference type="HOGENOM" id="CLU_049382_0_0_10"/>
<dbReference type="OrthoDB" id="9785995at2"/>
<dbReference type="Proteomes" id="UP000008811">
    <property type="component" value="Chromosome"/>
</dbReference>
<dbReference type="GO" id="GO:0005737">
    <property type="term" value="C:cytoplasm"/>
    <property type="evidence" value="ECO:0007669"/>
    <property type="project" value="UniProtKB-SubCell"/>
</dbReference>
<dbReference type="GO" id="GO:0016279">
    <property type="term" value="F:protein-lysine N-methyltransferase activity"/>
    <property type="evidence" value="ECO:0007669"/>
    <property type="project" value="RHEA"/>
</dbReference>
<dbReference type="GO" id="GO:0032259">
    <property type="term" value="P:methylation"/>
    <property type="evidence" value="ECO:0007669"/>
    <property type="project" value="UniProtKB-KW"/>
</dbReference>
<dbReference type="CDD" id="cd02440">
    <property type="entry name" value="AdoMet_MTases"/>
    <property type="match status" value="1"/>
</dbReference>
<dbReference type="Gene3D" id="3.40.50.150">
    <property type="entry name" value="Vaccinia Virus protein VP39"/>
    <property type="match status" value="1"/>
</dbReference>
<dbReference type="HAMAP" id="MF_00735">
    <property type="entry name" value="Methyltr_PrmA"/>
    <property type="match status" value="1"/>
</dbReference>
<dbReference type="InterPro" id="IPR050078">
    <property type="entry name" value="Ribosomal_L11_MeTrfase_PrmA"/>
</dbReference>
<dbReference type="InterPro" id="IPR004498">
    <property type="entry name" value="Ribosomal_PrmA_MeTrfase"/>
</dbReference>
<dbReference type="InterPro" id="IPR029063">
    <property type="entry name" value="SAM-dependent_MTases_sf"/>
</dbReference>
<dbReference type="NCBIfam" id="NF001785">
    <property type="entry name" value="PRK00517.2-2"/>
    <property type="match status" value="1"/>
</dbReference>
<dbReference type="PANTHER" id="PTHR43648">
    <property type="entry name" value="ELECTRON TRANSFER FLAVOPROTEIN BETA SUBUNIT LYSINE METHYLTRANSFERASE"/>
    <property type="match status" value="1"/>
</dbReference>
<dbReference type="PANTHER" id="PTHR43648:SF1">
    <property type="entry name" value="ELECTRON TRANSFER FLAVOPROTEIN BETA SUBUNIT LYSINE METHYLTRANSFERASE"/>
    <property type="match status" value="1"/>
</dbReference>
<dbReference type="Pfam" id="PF06325">
    <property type="entry name" value="PrmA"/>
    <property type="match status" value="1"/>
</dbReference>
<dbReference type="PIRSF" id="PIRSF000401">
    <property type="entry name" value="RPL11_MTase"/>
    <property type="match status" value="1"/>
</dbReference>
<dbReference type="SUPFAM" id="SSF53335">
    <property type="entry name" value="S-adenosyl-L-methionine-dependent methyltransferases"/>
    <property type="match status" value="1"/>
</dbReference>
<evidence type="ECO:0000255" key="1">
    <source>
        <dbReference type="HAMAP-Rule" id="MF_00735"/>
    </source>
</evidence>
<sequence length="289" mass="33103">MQPPKTHNHIELAFEIDSDLYELYIAVLSQEGIEYFLEEDKKLLAYLPESEWNAEKEESIKTLLRETFGSAPHFTASFMADRNWNAEWEAHLQPVEISNRFLIIQHQKEYDVKPDQIVIAINPKMSFGTGYHATTRLMLRQMEELDLADKKIMDIGTGTGVLAIAARKLGNRNPILAFDNNAWAAENAVENVAENDVADIQVELLDAEEEMVANLKEGYDLILANINKNVLDRILPVIRRHAPNAQVLLSGVLVYDEPWLKKLLKRIDYTNVKTIYEDEWLSALIEPKN</sequence>
<reference key="1">
    <citation type="submission" date="2008-06" db="EMBL/GenBank/DDBJ databases">
        <title>Complete sequence of Chlorobaculum parvum NCIB 8327.</title>
        <authorList>
            <consortium name="US DOE Joint Genome Institute"/>
            <person name="Lucas S."/>
            <person name="Copeland A."/>
            <person name="Lapidus A."/>
            <person name="Glavina del Rio T."/>
            <person name="Dalin E."/>
            <person name="Tice H."/>
            <person name="Bruce D."/>
            <person name="Goodwin L."/>
            <person name="Pitluck S."/>
            <person name="Schmutz J."/>
            <person name="Larimer F."/>
            <person name="Land M."/>
            <person name="Hauser L."/>
            <person name="Kyrpides N."/>
            <person name="Mikhailova N."/>
            <person name="Zhao F."/>
            <person name="Li T."/>
            <person name="Liu Z."/>
            <person name="Overmann J."/>
            <person name="Bryant D.A."/>
            <person name="Richardson P."/>
        </authorList>
    </citation>
    <scope>NUCLEOTIDE SEQUENCE [LARGE SCALE GENOMIC DNA]</scope>
    <source>
        <strain>DSM 263 / NCIMB 8327</strain>
    </source>
</reference>
<keyword id="KW-0963">Cytoplasm</keyword>
<keyword id="KW-0489">Methyltransferase</keyword>
<keyword id="KW-0949">S-adenosyl-L-methionine</keyword>
<keyword id="KW-0808">Transferase</keyword>
<comment type="function">
    <text evidence="1">Methylates ribosomal protein L11.</text>
</comment>
<comment type="catalytic activity">
    <reaction evidence="1">
        <text>L-lysyl-[protein] + 3 S-adenosyl-L-methionine = N(6),N(6),N(6)-trimethyl-L-lysyl-[protein] + 3 S-adenosyl-L-homocysteine + 3 H(+)</text>
        <dbReference type="Rhea" id="RHEA:54192"/>
        <dbReference type="Rhea" id="RHEA-COMP:9752"/>
        <dbReference type="Rhea" id="RHEA-COMP:13826"/>
        <dbReference type="ChEBI" id="CHEBI:15378"/>
        <dbReference type="ChEBI" id="CHEBI:29969"/>
        <dbReference type="ChEBI" id="CHEBI:57856"/>
        <dbReference type="ChEBI" id="CHEBI:59789"/>
        <dbReference type="ChEBI" id="CHEBI:61961"/>
    </reaction>
</comment>
<comment type="subcellular location">
    <subcellularLocation>
        <location evidence="1">Cytoplasm</location>
    </subcellularLocation>
</comment>
<comment type="similarity">
    <text evidence="1">Belongs to the methyltransferase superfamily. PrmA family.</text>
</comment>